<reference key="1">
    <citation type="journal article" date="2006" name="Proc. Natl. Acad. Sci. U.S.A.">
        <title>Molecular genetic anatomy of inter- and intraserotype variation in the human bacterial pathogen group A Streptococcus.</title>
        <authorList>
            <person name="Beres S.B."/>
            <person name="Richter E.W."/>
            <person name="Nagiec M.J."/>
            <person name="Sumby P."/>
            <person name="Porcella S.F."/>
            <person name="DeLeo F.R."/>
            <person name="Musser J.M."/>
        </authorList>
    </citation>
    <scope>NUCLEOTIDE SEQUENCE [LARGE SCALE GENOMIC DNA]</scope>
    <source>
        <strain>MGAS9429</strain>
    </source>
</reference>
<accession>Q1JM72</accession>
<feature type="chain" id="PRO_0000258313" description="Phosphopentomutase">
    <location>
        <begin position="1"/>
        <end position="403"/>
    </location>
</feature>
<feature type="binding site" evidence="1">
    <location>
        <position position="13"/>
    </location>
    <ligand>
        <name>Mn(2+)</name>
        <dbReference type="ChEBI" id="CHEBI:29035"/>
        <label>1</label>
    </ligand>
</feature>
<feature type="binding site" evidence="1">
    <location>
        <position position="298"/>
    </location>
    <ligand>
        <name>Mn(2+)</name>
        <dbReference type="ChEBI" id="CHEBI:29035"/>
        <label>2</label>
    </ligand>
</feature>
<feature type="binding site" evidence="1">
    <location>
        <position position="303"/>
    </location>
    <ligand>
        <name>Mn(2+)</name>
        <dbReference type="ChEBI" id="CHEBI:29035"/>
        <label>2</label>
    </ligand>
</feature>
<feature type="binding site" evidence="1">
    <location>
        <position position="339"/>
    </location>
    <ligand>
        <name>Mn(2+)</name>
        <dbReference type="ChEBI" id="CHEBI:29035"/>
        <label>1</label>
    </ligand>
</feature>
<feature type="binding site" evidence="1">
    <location>
        <position position="340"/>
    </location>
    <ligand>
        <name>Mn(2+)</name>
        <dbReference type="ChEBI" id="CHEBI:29035"/>
        <label>1</label>
    </ligand>
</feature>
<feature type="binding site" evidence="1">
    <location>
        <position position="351"/>
    </location>
    <ligand>
        <name>Mn(2+)</name>
        <dbReference type="ChEBI" id="CHEBI:29035"/>
        <label>2</label>
    </ligand>
</feature>
<evidence type="ECO:0000255" key="1">
    <source>
        <dbReference type="HAMAP-Rule" id="MF_00740"/>
    </source>
</evidence>
<keyword id="KW-0963">Cytoplasm</keyword>
<keyword id="KW-0413">Isomerase</keyword>
<keyword id="KW-0464">Manganese</keyword>
<keyword id="KW-0479">Metal-binding</keyword>
<comment type="function">
    <text evidence="1">Isomerase that catalyzes the conversion of deoxy-ribose 1-phosphate (dRib-1-P) and ribose 1-phosphate (Rib-1-P) to deoxy-ribose 5-phosphate (dRib-5-P) and ribose 5-phosphate (Rib-5-P), respectively.</text>
</comment>
<comment type="catalytic activity">
    <reaction evidence="1">
        <text>2-deoxy-alpha-D-ribose 1-phosphate = 2-deoxy-D-ribose 5-phosphate</text>
        <dbReference type="Rhea" id="RHEA:27658"/>
        <dbReference type="ChEBI" id="CHEBI:57259"/>
        <dbReference type="ChEBI" id="CHEBI:62877"/>
        <dbReference type="EC" id="5.4.2.7"/>
    </reaction>
</comment>
<comment type="catalytic activity">
    <reaction evidence="1">
        <text>alpha-D-ribose 1-phosphate = D-ribose 5-phosphate</text>
        <dbReference type="Rhea" id="RHEA:18793"/>
        <dbReference type="ChEBI" id="CHEBI:57720"/>
        <dbReference type="ChEBI" id="CHEBI:78346"/>
        <dbReference type="EC" id="5.4.2.7"/>
    </reaction>
</comment>
<comment type="cofactor">
    <cofactor evidence="1">
        <name>Mn(2+)</name>
        <dbReference type="ChEBI" id="CHEBI:29035"/>
    </cofactor>
    <text evidence="1">Binds 2 manganese ions.</text>
</comment>
<comment type="pathway">
    <text evidence="1">Carbohydrate degradation; 2-deoxy-D-ribose 1-phosphate degradation; D-glyceraldehyde 3-phosphate and acetaldehyde from 2-deoxy-alpha-D-ribose 1-phosphate: step 1/2.</text>
</comment>
<comment type="subcellular location">
    <subcellularLocation>
        <location evidence="1">Cytoplasm</location>
    </subcellularLocation>
</comment>
<comment type="similarity">
    <text evidence="1">Belongs to the phosphopentomutase family.</text>
</comment>
<sequence length="403" mass="44258">MSKFNRIHLVVLDSVGIGAAPDADKFFNAGVADTDSDTLGHISETAGLSVPNMAKIGLGNISRPIPLKTIPTEDNPTGYVTKLEEVSLGKDTMTGHWEIMGLNITEPFDTFWNGFPEEILTKIEEFSGRKIIREANKPYSGTAVIDDFGPRQMETGELIVYTSADPVLQIAAHEDIIPVEELYKICEYARSITLERPALLGRIIARPYVGEPGNFTRTANRHDYAVSPFQDTVLNKLADAGVPTYAVGKINDIFNGSGITNDMGHNKSNSHGIDTLIKTLQLPEFTKGFSFTNLVDFDANFGHRRDPEGYRDCLHEFDNRLPEIFANMKEDDLLLITADHGNDPTYAGTDHTREYIPLLAYSASFTGNGLIPQGHFADISATVAENFGVDTAMIGESFLGHLK</sequence>
<proteinExistence type="inferred from homology"/>
<name>DEOB_STRPC</name>
<organism>
    <name type="scientific">Streptococcus pyogenes serotype M12 (strain MGAS9429)</name>
    <dbReference type="NCBI Taxonomy" id="370551"/>
    <lineage>
        <taxon>Bacteria</taxon>
        <taxon>Bacillati</taxon>
        <taxon>Bacillota</taxon>
        <taxon>Bacilli</taxon>
        <taxon>Lactobacillales</taxon>
        <taxon>Streptococcaceae</taxon>
        <taxon>Streptococcus</taxon>
    </lineage>
</organism>
<gene>
    <name evidence="1" type="primary">deoB</name>
    <name type="ordered locus">MGAS9429_Spy0752</name>
</gene>
<dbReference type="EC" id="5.4.2.7" evidence="1"/>
<dbReference type="EMBL" id="CP000259">
    <property type="protein sequence ID" value="ABF31940.1"/>
    <property type="molecule type" value="Genomic_DNA"/>
</dbReference>
<dbReference type="RefSeq" id="WP_002990153.1">
    <property type="nucleotide sequence ID" value="NC_008021.1"/>
</dbReference>
<dbReference type="SMR" id="Q1JM72"/>
<dbReference type="KEGG" id="spk:MGAS9429_Spy0752"/>
<dbReference type="HOGENOM" id="CLU_053861_0_0_9"/>
<dbReference type="UniPathway" id="UPA00002">
    <property type="reaction ID" value="UER00467"/>
</dbReference>
<dbReference type="Proteomes" id="UP000002433">
    <property type="component" value="Chromosome"/>
</dbReference>
<dbReference type="GO" id="GO:0005829">
    <property type="term" value="C:cytosol"/>
    <property type="evidence" value="ECO:0007669"/>
    <property type="project" value="TreeGrafter"/>
</dbReference>
<dbReference type="GO" id="GO:0000287">
    <property type="term" value="F:magnesium ion binding"/>
    <property type="evidence" value="ECO:0007669"/>
    <property type="project" value="InterPro"/>
</dbReference>
<dbReference type="GO" id="GO:0030145">
    <property type="term" value="F:manganese ion binding"/>
    <property type="evidence" value="ECO:0007669"/>
    <property type="project" value="UniProtKB-UniRule"/>
</dbReference>
<dbReference type="GO" id="GO:0008973">
    <property type="term" value="F:phosphopentomutase activity"/>
    <property type="evidence" value="ECO:0007669"/>
    <property type="project" value="UniProtKB-UniRule"/>
</dbReference>
<dbReference type="GO" id="GO:0006018">
    <property type="term" value="P:2-deoxyribose 1-phosphate catabolic process"/>
    <property type="evidence" value="ECO:0007669"/>
    <property type="project" value="UniProtKB-UniRule"/>
</dbReference>
<dbReference type="GO" id="GO:0006015">
    <property type="term" value="P:5-phosphoribose 1-diphosphate biosynthetic process"/>
    <property type="evidence" value="ECO:0007669"/>
    <property type="project" value="UniProtKB-UniPathway"/>
</dbReference>
<dbReference type="GO" id="GO:0043094">
    <property type="term" value="P:metabolic compound salvage"/>
    <property type="evidence" value="ECO:0007669"/>
    <property type="project" value="InterPro"/>
</dbReference>
<dbReference type="GO" id="GO:0009117">
    <property type="term" value="P:nucleotide metabolic process"/>
    <property type="evidence" value="ECO:0007669"/>
    <property type="project" value="InterPro"/>
</dbReference>
<dbReference type="CDD" id="cd16009">
    <property type="entry name" value="PPM"/>
    <property type="match status" value="1"/>
</dbReference>
<dbReference type="FunFam" id="3.30.70.1250:FF:000001">
    <property type="entry name" value="Phosphopentomutase"/>
    <property type="match status" value="1"/>
</dbReference>
<dbReference type="Gene3D" id="3.40.720.10">
    <property type="entry name" value="Alkaline Phosphatase, subunit A"/>
    <property type="match status" value="1"/>
</dbReference>
<dbReference type="Gene3D" id="3.30.70.1250">
    <property type="entry name" value="Phosphopentomutase"/>
    <property type="match status" value="1"/>
</dbReference>
<dbReference type="HAMAP" id="MF_00740">
    <property type="entry name" value="Phosphopentomut"/>
    <property type="match status" value="1"/>
</dbReference>
<dbReference type="InterPro" id="IPR017850">
    <property type="entry name" value="Alkaline_phosphatase_core_sf"/>
</dbReference>
<dbReference type="InterPro" id="IPR010045">
    <property type="entry name" value="DeoB"/>
</dbReference>
<dbReference type="InterPro" id="IPR006124">
    <property type="entry name" value="Metalloenzyme"/>
</dbReference>
<dbReference type="InterPro" id="IPR024052">
    <property type="entry name" value="Phosphopentomutase_DeoB_cap_sf"/>
</dbReference>
<dbReference type="NCBIfam" id="TIGR01696">
    <property type="entry name" value="deoB"/>
    <property type="match status" value="1"/>
</dbReference>
<dbReference type="NCBIfam" id="NF003766">
    <property type="entry name" value="PRK05362.1"/>
    <property type="match status" value="1"/>
</dbReference>
<dbReference type="PANTHER" id="PTHR21110">
    <property type="entry name" value="PHOSPHOPENTOMUTASE"/>
    <property type="match status" value="1"/>
</dbReference>
<dbReference type="PANTHER" id="PTHR21110:SF0">
    <property type="entry name" value="PHOSPHOPENTOMUTASE"/>
    <property type="match status" value="1"/>
</dbReference>
<dbReference type="Pfam" id="PF01676">
    <property type="entry name" value="Metalloenzyme"/>
    <property type="match status" value="1"/>
</dbReference>
<dbReference type="PIRSF" id="PIRSF001491">
    <property type="entry name" value="Ppentomutase"/>
    <property type="match status" value="1"/>
</dbReference>
<dbReference type="SUPFAM" id="SSF53649">
    <property type="entry name" value="Alkaline phosphatase-like"/>
    <property type="match status" value="1"/>
</dbReference>
<dbReference type="SUPFAM" id="SSF143856">
    <property type="entry name" value="DeoB insert domain-like"/>
    <property type="match status" value="1"/>
</dbReference>
<protein>
    <recommendedName>
        <fullName evidence="1">Phosphopentomutase</fullName>
        <ecNumber evidence="1">5.4.2.7</ecNumber>
    </recommendedName>
    <alternativeName>
        <fullName evidence="1">Phosphodeoxyribomutase</fullName>
    </alternativeName>
</protein>